<keyword id="KW-0687">Ribonucleoprotein</keyword>
<keyword id="KW-0689">Ribosomal protein</keyword>
<evidence type="ECO:0000255" key="1">
    <source>
        <dbReference type="HAMAP-Rule" id="MF_00294"/>
    </source>
</evidence>
<evidence type="ECO:0000305" key="2"/>
<sequence length="59" mass="6900">MGKKKGKGAVELISLICEETGIRNYTTTKNRRNKQEKLELMKYCPKLRKHTLHKEGKIK</sequence>
<reference key="1">
    <citation type="journal article" date="2011" name="J. Bacteriol.">
        <title>Whole-genome sequences of thirteen isolates of Borrelia burgdorferi.</title>
        <authorList>
            <person name="Schutzer S.E."/>
            <person name="Fraser-Liggett C.M."/>
            <person name="Casjens S.R."/>
            <person name="Qiu W.G."/>
            <person name="Dunn J.J."/>
            <person name="Mongodin E.F."/>
            <person name="Luft B.J."/>
        </authorList>
    </citation>
    <scope>NUCLEOTIDE SEQUENCE [LARGE SCALE GENOMIC DNA]</scope>
    <source>
        <strain>ZS7</strain>
    </source>
</reference>
<proteinExistence type="inferred from homology"/>
<comment type="similarity">
    <text evidence="1">Belongs to the bacterial ribosomal protein bL33 family.</text>
</comment>
<organism>
    <name type="scientific">Borreliella burgdorferi (strain ZS7)</name>
    <name type="common">Borrelia burgdorferi</name>
    <dbReference type="NCBI Taxonomy" id="445985"/>
    <lineage>
        <taxon>Bacteria</taxon>
        <taxon>Pseudomonadati</taxon>
        <taxon>Spirochaetota</taxon>
        <taxon>Spirochaetia</taxon>
        <taxon>Spirochaetales</taxon>
        <taxon>Borreliaceae</taxon>
        <taxon>Borreliella</taxon>
    </lineage>
</organism>
<feature type="chain" id="PRO_1000119434" description="Large ribosomal subunit protein bL33">
    <location>
        <begin position="1"/>
        <end position="59"/>
    </location>
</feature>
<protein>
    <recommendedName>
        <fullName evidence="1">Large ribosomal subunit protein bL33</fullName>
    </recommendedName>
    <alternativeName>
        <fullName evidence="2">50S ribosomal protein L33</fullName>
    </alternativeName>
</protein>
<dbReference type="EMBL" id="CP001205">
    <property type="protein sequence ID" value="ACK74479.1"/>
    <property type="molecule type" value="Genomic_DNA"/>
</dbReference>
<dbReference type="RefSeq" id="WP_002556991.1">
    <property type="nucleotide sequence ID" value="NC_011728.1"/>
</dbReference>
<dbReference type="SMR" id="B7J1W7"/>
<dbReference type="GeneID" id="77265235"/>
<dbReference type="KEGG" id="bbz:BbuZS7_0398"/>
<dbReference type="HOGENOM" id="CLU_190949_0_2_12"/>
<dbReference type="Proteomes" id="UP000006901">
    <property type="component" value="Chromosome"/>
</dbReference>
<dbReference type="GO" id="GO:0005737">
    <property type="term" value="C:cytoplasm"/>
    <property type="evidence" value="ECO:0007669"/>
    <property type="project" value="UniProtKB-ARBA"/>
</dbReference>
<dbReference type="GO" id="GO:1990904">
    <property type="term" value="C:ribonucleoprotein complex"/>
    <property type="evidence" value="ECO:0007669"/>
    <property type="project" value="UniProtKB-KW"/>
</dbReference>
<dbReference type="GO" id="GO:0005840">
    <property type="term" value="C:ribosome"/>
    <property type="evidence" value="ECO:0007669"/>
    <property type="project" value="UniProtKB-KW"/>
</dbReference>
<dbReference type="GO" id="GO:0003735">
    <property type="term" value="F:structural constituent of ribosome"/>
    <property type="evidence" value="ECO:0007669"/>
    <property type="project" value="InterPro"/>
</dbReference>
<dbReference type="GO" id="GO:0006412">
    <property type="term" value="P:translation"/>
    <property type="evidence" value="ECO:0007669"/>
    <property type="project" value="UniProtKB-UniRule"/>
</dbReference>
<dbReference type="Gene3D" id="2.20.28.120">
    <property type="entry name" value="Ribosomal protein L33"/>
    <property type="match status" value="1"/>
</dbReference>
<dbReference type="HAMAP" id="MF_00294">
    <property type="entry name" value="Ribosomal_bL33"/>
    <property type="match status" value="1"/>
</dbReference>
<dbReference type="InterPro" id="IPR001705">
    <property type="entry name" value="Ribosomal_bL33"/>
</dbReference>
<dbReference type="InterPro" id="IPR018264">
    <property type="entry name" value="Ribosomal_bL33_CS"/>
</dbReference>
<dbReference type="InterPro" id="IPR038584">
    <property type="entry name" value="Ribosomal_bL33_sf"/>
</dbReference>
<dbReference type="InterPro" id="IPR011332">
    <property type="entry name" value="Ribosomal_zn-bd"/>
</dbReference>
<dbReference type="NCBIfam" id="NF001764">
    <property type="entry name" value="PRK00504.1"/>
    <property type="match status" value="1"/>
</dbReference>
<dbReference type="NCBIfam" id="NF001860">
    <property type="entry name" value="PRK00595.1"/>
    <property type="match status" value="1"/>
</dbReference>
<dbReference type="NCBIfam" id="TIGR01023">
    <property type="entry name" value="rpmG_bact"/>
    <property type="match status" value="1"/>
</dbReference>
<dbReference type="PANTHER" id="PTHR43168">
    <property type="entry name" value="50S RIBOSOMAL PROTEIN L33, CHLOROPLASTIC"/>
    <property type="match status" value="1"/>
</dbReference>
<dbReference type="PANTHER" id="PTHR43168:SF2">
    <property type="entry name" value="LARGE RIBOSOMAL SUBUNIT PROTEIN BL33C"/>
    <property type="match status" value="1"/>
</dbReference>
<dbReference type="Pfam" id="PF00471">
    <property type="entry name" value="Ribosomal_L33"/>
    <property type="match status" value="1"/>
</dbReference>
<dbReference type="SUPFAM" id="SSF57829">
    <property type="entry name" value="Zn-binding ribosomal proteins"/>
    <property type="match status" value="1"/>
</dbReference>
<dbReference type="PROSITE" id="PS00582">
    <property type="entry name" value="RIBOSOMAL_L33"/>
    <property type="match status" value="1"/>
</dbReference>
<gene>
    <name evidence="1" type="primary">rpmG</name>
    <name type="ordered locus">BbuZS7_0398</name>
</gene>
<name>RL33_BORBZ</name>
<accession>B7J1W7</accession>